<protein>
    <recommendedName>
        <fullName>Zinc finger protein 30 homolog</fullName>
        <shortName>Zfp-30</shortName>
    </recommendedName>
    <alternativeName>
        <fullName>Zinc finger protein 745</fullName>
    </alternativeName>
</protein>
<organism>
    <name type="scientific">Homo sapiens</name>
    <name type="common">Human</name>
    <dbReference type="NCBI Taxonomy" id="9606"/>
    <lineage>
        <taxon>Eukaryota</taxon>
        <taxon>Metazoa</taxon>
        <taxon>Chordata</taxon>
        <taxon>Craniata</taxon>
        <taxon>Vertebrata</taxon>
        <taxon>Euteleostomi</taxon>
        <taxon>Mammalia</taxon>
        <taxon>Eutheria</taxon>
        <taxon>Euarchontoglires</taxon>
        <taxon>Primates</taxon>
        <taxon>Haplorrhini</taxon>
        <taxon>Catarrhini</taxon>
        <taxon>Hominidae</taxon>
        <taxon>Homo</taxon>
    </lineage>
</organism>
<gene>
    <name type="primary">ZFP30</name>
    <name type="synonym">KIAA0961</name>
    <name type="synonym">ZNF745</name>
</gene>
<name>ZFP30_HUMAN</name>
<reference key="1">
    <citation type="journal article" date="1999" name="DNA Res.">
        <title>Prediction of the coding sequences of unidentified human genes. XIII. The complete sequences of 100 new cDNA clones from brain which code for large proteins in vitro.</title>
        <authorList>
            <person name="Nagase T."/>
            <person name="Ishikawa K."/>
            <person name="Suyama M."/>
            <person name="Kikuno R."/>
            <person name="Hirosawa M."/>
            <person name="Miyajima N."/>
            <person name="Tanaka A."/>
            <person name="Kotani H."/>
            <person name="Nomura N."/>
            <person name="Ohara O."/>
        </authorList>
    </citation>
    <scope>NUCLEOTIDE SEQUENCE [LARGE SCALE MRNA]</scope>
    <source>
        <tissue>Brain</tissue>
    </source>
</reference>
<reference key="2">
    <citation type="journal article" date="2004" name="Genome Res.">
        <title>The status, quality, and expansion of the NIH full-length cDNA project: the Mammalian Gene Collection (MGC).</title>
        <authorList>
            <consortium name="The MGC Project Team"/>
        </authorList>
    </citation>
    <scope>NUCLEOTIDE SEQUENCE [LARGE SCALE MRNA]</scope>
    <source>
        <tissue>Eye</tissue>
    </source>
</reference>
<reference key="3">
    <citation type="journal article" date="2017" name="Nat. Struct. Mol. Biol.">
        <title>Site-specific mapping of the human SUMO proteome reveals co-modification with phosphorylation.</title>
        <authorList>
            <person name="Hendriks I.A."/>
            <person name="Lyon D."/>
            <person name="Young C."/>
            <person name="Jensen L.J."/>
            <person name="Vertegaal A.C."/>
            <person name="Nielsen M.L."/>
        </authorList>
    </citation>
    <scope>SUMOYLATION [LARGE SCALE ANALYSIS] AT LYS-110 AND LYS-141</scope>
    <scope>IDENTIFICATION BY MASS SPECTROMETRY [LARGE SCALE ANALYSIS]</scope>
</reference>
<feature type="chain" id="PRO_0000047291" description="Zinc finger protein 30 homolog">
    <location>
        <begin position="1"/>
        <end position="519"/>
    </location>
</feature>
<feature type="domain" description="KRAB" evidence="3">
    <location>
        <begin position="6"/>
        <end position="78"/>
    </location>
</feature>
<feature type="zinc finger region" description="C2H2-type 1" evidence="2">
    <location>
        <begin position="158"/>
        <end position="180"/>
    </location>
</feature>
<feature type="zinc finger region" description="C2H2-type 2" evidence="2">
    <location>
        <begin position="186"/>
        <end position="208"/>
    </location>
</feature>
<feature type="zinc finger region" description="C2H2-type 3" evidence="2">
    <location>
        <begin position="214"/>
        <end position="236"/>
    </location>
</feature>
<feature type="zinc finger region" description="C2H2-type 4" evidence="2">
    <location>
        <begin position="242"/>
        <end position="264"/>
    </location>
</feature>
<feature type="zinc finger region" description="C2H2-type 5; degenerate" evidence="2">
    <location>
        <begin position="270"/>
        <end position="292"/>
    </location>
</feature>
<feature type="zinc finger region" description="C2H2-type 6" evidence="2">
    <location>
        <begin position="298"/>
        <end position="320"/>
    </location>
</feature>
<feature type="zinc finger region" description="C2H2-type 7" evidence="2">
    <location>
        <begin position="326"/>
        <end position="348"/>
    </location>
</feature>
<feature type="zinc finger region" description="C2H2-type 8" evidence="2">
    <location>
        <begin position="354"/>
        <end position="376"/>
    </location>
</feature>
<feature type="zinc finger region" description="C2H2-type 9" evidence="2">
    <location>
        <begin position="382"/>
        <end position="404"/>
    </location>
</feature>
<feature type="zinc finger region" description="C2H2-type 10" evidence="2">
    <location>
        <begin position="410"/>
        <end position="432"/>
    </location>
</feature>
<feature type="zinc finger region" description="C2H2-type 11" evidence="2">
    <location>
        <begin position="438"/>
        <end position="460"/>
    </location>
</feature>
<feature type="zinc finger region" description="C2H2-type 12" evidence="2">
    <location>
        <begin position="466"/>
        <end position="488"/>
    </location>
</feature>
<feature type="zinc finger region" description="C2H2-type 13" evidence="2">
    <location>
        <begin position="494"/>
        <end position="516"/>
    </location>
</feature>
<feature type="modified residue" description="Asymmetric dimethylarginine" evidence="1">
    <location>
        <position position="75"/>
    </location>
</feature>
<feature type="cross-link" description="Glycyl lysine isopeptide (Lys-Gly) (interchain with G-Cter in SUMO2)" evidence="5">
    <location>
        <position position="110"/>
    </location>
</feature>
<feature type="cross-link" description="Glycyl lysine isopeptide (Lys-Gly) (interchain with G-Cter in SUMO2)" evidence="5">
    <location>
        <position position="141"/>
    </location>
</feature>
<sequence length="519" mass="61558">MARDLVMFRDVAVDFSQEEWECLNSYQRNLYRDVILENYSNLVSLAGCSISKPDVITLLEQGKEPWMVVRDEKRRWTLDLESRYDTKKLFQGKDIYEMNLSQWKVMERIKSCGLEEQESPHEVCFRQVTKTTSEKMPTYRKLTSLPLYQKSHNREKPYECGECGKAFRVRQQLTFHQRIHTGEKPYECKECGKAFRQCAHLSRHQRIHTSDKLYECKKCGKIFTCGSDLRVHQRIHIGEKPYECKECGKAFRVRGQLNLHQRIHTGEKPYECKECGKAFRQYAHLTRHQRLNIAEKCYECKECGQAFLCSTGLRLHHKLHTGEKPYECKECGKAFRVRQQLTLHQRIHTGEKPYDCKECGKTFSRGYHLTLHQRIHTGEKPYECKECQKFFRRYSELISHQGIHIGEKPYECKECGKAFRLFSQLTQHQSIHFGEKPFKCKECEKTFRLLSQLTQHQSIHTGEKPYDCKECGKAFRLHSSLIQHQRIHSGEKPYKCKECKKAFRQHSHLTYHQRIHNVT</sequence>
<keyword id="KW-0238">DNA-binding</keyword>
<keyword id="KW-1017">Isopeptide bond</keyword>
<keyword id="KW-0479">Metal-binding</keyword>
<keyword id="KW-0488">Methylation</keyword>
<keyword id="KW-0539">Nucleus</keyword>
<keyword id="KW-1267">Proteomics identification</keyword>
<keyword id="KW-1185">Reference proteome</keyword>
<keyword id="KW-0677">Repeat</keyword>
<keyword id="KW-0804">Transcription</keyword>
<keyword id="KW-0805">Transcription regulation</keyword>
<keyword id="KW-0832">Ubl conjugation</keyword>
<keyword id="KW-0862">Zinc</keyword>
<keyword id="KW-0863">Zinc-finger</keyword>
<evidence type="ECO:0000250" key="1">
    <source>
        <dbReference type="UniProtKB" id="Q60585"/>
    </source>
</evidence>
<evidence type="ECO:0000255" key="2">
    <source>
        <dbReference type="PROSITE-ProRule" id="PRU00042"/>
    </source>
</evidence>
<evidence type="ECO:0000255" key="3">
    <source>
        <dbReference type="PROSITE-ProRule" id="PRU00119"/>
    </source>
</evidence>
<evidence type="ECO:0000305" key="4"/>
<evidence type="ECO:0007744" key="5">
    <source>
    </source>
</evidence>
<comment type="function">
    <text>May be involved in transcriptional regulation.</text>
</comment>
<comment type="subcellular location">
    <subcellularLocation>
        <location evidence="4">Nucleus</location>
    </subcellularLocation>
</comment>
<comment type="similarity">
    <text evidence="4">Belongs to the krueppel C2H2-type zinc-finger protein family.</text>
</comment>
<comment type="sequence caution" evidence="4">
    <conflict type="erroneous initiation">
        <sequence resource="EMBL-CDS" id="BAA76805"/>
    </conflict>
</comment>
<accession>Q9Y2G7</accession>
<accession>Q58EY8</accession>
<dbReference type="EMBL" id="AB023178">
    <property type="protein sequence ID" value="BAA76805.2"/>
    <property type="status" value="ALT_INIT"/>
    <property type="molecule type" value="mRNA"/>
</dbReference>
<dbReference type="EMBL" id="BC041087">
    <property type="protein sequence ID" value="AAH41087.1"/>
    <property type="molecule type" value="mRNA"/>
</dbReference>
<dbReference type="CCDS" id="CCDS33005.1"/>
<dbReference type="RefSeq" id="NP_001307595.1">
    <property type="nucleotide sequence ID" value="NM_001320666.3"/>
</dbReference>
<dbReference type="RefSeq" id="NP_001307596.1">
    <property type="nucleotide sequence ID" value="NM_001320667.3"/>
</dbReference>
<dbReference type="RefSeq" id="NP_001307597.1">
    <property type="nucleotide sequence ID" value="NM_001320668.3"/>
</dbReference>
<dbReference type="RefSeq" id="NP_001307598.1">
    <property type="nucleotide sequence ID" value="NM_001320669.3"/>
</dbReference>
<dbReference type="RefSeq" id="NP_055713.1">
    <property type="nucleotide sequence ID" value="NM_014898.4"/>
</dbReference>
<dbReference type="SMR" id="Q9Y2G7"/>
<dbReference type="BioGRID" id="116509">
    <property type="interactions" value="17"/>
</dbReference>
<dbReference type="FunCoup" id="Q9Y2G7">
    <property type="interactions" value="462"/>
</dbReference>
<dbReference type="IntAct" id="Q9Y2G7">
    <property type="interactions" value="8"/>
</dbReference>
<dbReference type="STRING" id="9606.ENSP00000343581"/>
<dbReference type="GlyGen" id="Q9Y2G7">
    <property type="glycosylation" value="2 sites, 1 O-linked glycan (2 sites)"/>
</dbReference>
<dbReference type="iPTMnet" id="Q9Y2G7"/>
<dbReference type="PhosphoSitePlus" id="Q9Y2G7"/>
<dbReference type="BioMuta" id="ZFP30"/>
<dbReference type="DMDM" id="6686181"/>
<dbReference type="jPOST" id="Q9Y2G7"/>
<dbReference type="MassIVE" id="Q9Y2G7"/>
<dbReference type="PaxDb" id="9606-ENSP00000343581"/>
<dbReference type="PeptideAtlas" id="Q9Y2G7"/>
<dbReference type="ProteomicsDB" id="85772"/>
<dbReference type="Pumba" id="Q9Y2G7"/>
<dbReference type="Antibodypedia" id="29933">
    <property type="antibodies" value="76 antibodies from 19 providers"/>
</dbReference>
<dbReference type="DNASU" id="22835"/>
<dbReference type="Ensembl" id="ENST00000351218.6">
    <property type="protein sequence ID" value="ENSP00000343581.1"/>
    <property type="gene ID" value="ENSG00000120784.17"/>
</dbReference>
<dbReference type="Ensembl" id="ENST00000514101.6">
    <property type="protein sequence ID" value="ENSP00000422930.2"/>
    <property type="gene ID" value="ENSG00000120784.17"/>
</dbReference>
<dbReference type="Ensembl" id="ENST00000684514.1">
    <property type="protein sequence ID" value="ENSP00000508019.1"/>
    <property type="gene ID" value="ENSG00000120784.17"/>
</dbReference>
<dbReference type="GeneID" id="22835"/>
<dbReference type="KEGG" id="hsa:22835"/>
<dbReference type="MANE-Select" id="ENST00000684514.1">
    <property type="protein sequence ID" value="ENSP00000508019.1"/>
    <property type="RefSeq nucleotide sequence ID" value="NM_001320669.3"/>
    <property type="RefSeq protein sequence ID" value="NP_001307598.1"/>
</dbReference>
<dbReference type="UCSC" id="uc002ogx.2">
    <property type="organism name" value="human"/>
</dbReference>
<dbReference type="AGR" id="HGNC:29555"/>
<dbReference type="CTD" id="22835"/>
<dbReference type="GeneCards" id="ZFP30"/>
<dbReference type="HGNC" id="HGNC:29555">
    <property type="gene designation" value="ZFP30"/>
</dbReference>
<dbReference type="HPA" id="ENSG00000120784">
    <property type="expression patterns" value="Low tissue specificity"/>
</dbReference>
<dbReference type="MIM" id="617317">
    <property type="type" value="gene"/>
</dbReference>
<dbReference type="neXtProt" id="NX_Q9Y2G7"/>
<dbReference type="OpenTargets" id="ENSG00000120784"/>
<dbReference type="PharmGKB" id="PA143485675"/>
<dbReference type="VEuPathDB" id="HostDB:ENSG00000120784"/>
<dbReference type="eggNOG" id="KOG1721">
    <property type="taxonomic scope" value="Eukaryota"/>
</dbReference>
<dbReference type="GeneTree" id="ENSGT00940000162363"/>
<dbReference type="HOGENOM" id="CLU_002678_44_0_1"/>
<dbReference type="InParanoid" id="Q9Y2G7"/>
<dbReference type="OMA" id="YQRIHNR"/>
<dbReference type="PAN-GO" id="Q9Y2G7">
    <property type="GO annotations" value="4 GO annotations based on evolutionary models"/>
</dbReference>
<dbReference type="PhylomeDB" id="Q9Y2G7"/>
<dbReference type="TreeFam" id="TF341817"/>
<dbReference type="PathwayCommons" id="Q9Y2G7"/>
<dbReference type="Reactome" id="R-HSA-212436">
    <property type="pathway name" value="Generic Transcription Pathway"/>
</dbReference>
<dbReference type="SignaLink" id="Q9Y2G7"/>
<dbReference type="BioGRID-ORCS" id="22835">
    <property type="hits" value="8 hits in 1144 CRISPR screens"/>
</dbReference>
<dbReference type="ChiTaRS" id="ZFP30">
    <property type="organism name" value="human"/>
</dbReference>
<dbReference type="GenomeRNAi" id="22835"/>
<dbReference type="Pharos" id="Q9Y2G7">
    <property type="development level" value="Tdark"/>
</dbReference>
<dbReference type="PRO" id="PR:Q9Y2G7"/>
<dbReference type="Proteomes" id="UP000005640">
    <property type="component" value="Chromosome 19"/>
</dbReference>
<dbReference type="RNAct" id="Q9Y2G7">
    <property type="molecule type" value="protein"/>
</dbReference>
<dbReference type="Bgee" id="ENSG00000120784">
    <property type="expression patterns" value="Expressed in cortical plate and 150 other cell types or tissues"/>
</dbReference>
<dbReference type="ExpressionAtlas" id="Q9Y2G7">
    <property type="expression patterns" value="baseline and differential"/>
</dbReference>
<dbReference type="GO" id="GO:0005634">
    <property type="term" value="C:nucleus"/>
    <property type="evidence" value="ECO:0000318"/>
    <property type="project" value="GO_Central"/>
</dbReference>
<dbReference type="GO" id="GO:0000981">
    <property type="term" value="F:DNA-binding transcription factor activity, RNA polymerase II-specific"/>
    <property type="evidence" value="ECO:0000318"/>
    <property type="project" value="GO_Central"/>
</dbReference>
<dbReference type="GO" id="GO:0000978">
    <property type="term" value="F:RNA polymerase II cis-regulatory region sequence-specific DNA binding"/>
    <property type="evidence" value="ECO:0000318"/>
    <property type="project" value="GO_Central"/>
</dbReference>
<dbReference type="GO" id="GO:0008270">
    <property type="term" value="F:zinc ion binding"/>
    <property type="evidence" value="ECO:0007669"/>
    <property type="project" value="UniProtKB-KW"/>
</dbReference>
<dbReference type="GO" id="GO:0006357">
    <property type="term" value="P:regulation of transcription by RNA polymerase II"/>
    <property type="evidence" value="ECO:0000318"/>
    <property type="project" value="GO_Central"/>
</dbReference>
<dbReference type="CDD" id="cd07765">
    <property type="entry name" value="KRAB_A-box"/>
    <property type="match status" value="1"/>
</dbReference>
<dbReference type="FunFam" id="3.30.160.60:FF:000020">
    <property type="entry name" value="Zinc finger protein 14 homolog"/>
    <property type="match status" value="4"/>
</dbReference>
<dbReference type="FunFam" id="3.30.160.60:FF:000473">
    <property type="entry name" value="zinc finger protein 14 homolog isoform X1"/>
    <property type="match status" value="1"/>
</dbReference>
<dbReference type="FunFam" id="3.30.160.60:FF:000561">
    <property type="entry name" value="Zinc finger protein 30 homolog"/>
    <property type="match status" value="1"/>
</dbReference>
<dbReference type="FunFam" id="3.30.160.60:FF:000434">
    <property type="entry name" value="zinc finger protein 30 homolog"/>
    <property type="match status" value="2"/>
</dbReference>
<dbReference type="FunFam" id="3.30.160.60:FF:002343">
    <property type="entry name" value="Zinc finger protein 33A"/>
    <property type="match status" value="1"/>
</dbReference>
<dbReference type="FunFam" id="3.30.160.60:FF:001498">
    <property type="entry name" value="Zinc finger protein 404"/>
    <property type="match status" value="1"/>
</dbReference>
<dbReference type="FunFam" id="3.30.160.60:FF:002254">
    <property type="entry name" value="Zinc finger protein 540"/>
    <property type="match status" value="2"/>
</dbReference>
<dbReference type="FunFam" id="3.30.160.60:FF:001270">
    <property type="entry name" value="zinc finger protein 583 isoform X1"/>
    <property type="match status" value="1"/>
</dbReference>
<dbReference type="Gene3D" id="6.10.140.140">
    <property type="match status" value="1"/>
</dbReference>
<dbReference type="Gene3D" id="3.30.160.60">
    <property type="entry name" value="Classic Zinc Finger"/>
    <property type="match status" value="13"/>
</dbReference>
<dbReference type="InterPro" id="IPR001909">
    <property type="entry name" value="KRAB"/>
</dbReference>
<dbReference type="InterPro" id="IPR036051">
    <property type="entry name" value="KRAB_dom_sf"/>
</dbReference>
<dbReference type="InterPro" id="IPR036236">
    <property type="entry name" value="Znf_C2H2_sf"/>
</dbReference>
<dbReference type="InterPro" id="IPR013087">
    <property type="entry name" value="Znf_C2H2_type"/>
</dbReference>
<dbReference type="PANTHER" id="PTHR24381">
    <property type="entry name" value="ZINC FINGER PROTEIN"/>
    <property type="match status" value="1"/>
</dbReference>
<dbReference type="PANTHER" id="PTHR24381:SF435">
    <property type="entry name" value="ZINC FINGER PROTEIN 59"/>
    <property type="match status" value="1"/>
</dbReference>
<dbReference type="Pfam" id="PF01352">
    <property type="entry name" value="KRAB"/>
    <property type="match status" value="1"/>
</dbReference>
<dbReference type="Pfam" id="PF00096">
    <property type="entry name" value="zf-C2H2"/>
    <property type="match status" value="12"/>
</dbReference>
<dbReference type="SMART" id="SM00349">
    <property type="entry name" value="KRAB"/>
    <property type="match status" value="1"/>
</dbReference>
<dbReference type="SMART" id="SM00355">
    <property type="entry name" value="ZnF_C2H2"/>
    <property type="match status" value="13"/>
</dbReference>
<dbReference type="SUPFAM" id="SSF57667">
    <property type="entry name" value="beta-beta-alpha zinc fingers"/>
    <property type="match status" value="7"/>
</dbReference>
<dbReference type="SUPFAM" id="SSF109640">
    <property type="entry name" value="KRAB domain (Kruppel-associated box)"/>
    <property type="match status" value="1"/>
</dbReference>
<dbReference type="PROSITE" id="PS50805">
    <property type="entry name" value="KRAB"/>
    <property type="match status" value="1"/>
</dbReference>
<dbReference type="PROSITE" id="PS00028">
    <property type="entry name" value="ZINC_FINGER_C2H2_1"/>
    <property type="match status" value="12"/>
</dbReference>
<dbReference type="PROSITE" id="PS50157">
    <property type="entry name" value="ZINC_FINGER_C2H2_2"/>
    <property type="match status" value="13"/>
</dbReference>
<proteinExistence type="evidence at protein level"/>